<dbReference type="EC" id="3.6.4.-" evidence="1"/>
<dbReference type="EMBL" id="CP001025">
    <property type="protein sequence ID" value="ACB63104.1"/>
    <property type="molecule type" value="Genomic_DNA"/>
</dbReference>
<dbReference type="RefSeq" id="WP_012363104.1">
    <property type="nucleotide sequence ID" value="NC_010551.1"/>
</dbReference>
<dbReference type="SMR" id="B1YTD9"/>
<dbReference type="KEGG" id="bac:BamMC406_0607"/>
<dbReference type="HOGENOM" id="CLU_055599_1_0_4"/>
<dbReference type="OrthoDB" id="9804478at2"/>
<dbReference type="Proteomes" id="UP000001680">
    <property type="component" value="Chromosome 1"/>
</dbReference>
<dbReference type="GO" id="GO:0005737">
    <property type="term" value="C:cytoplasm"/>
    <property type="evidence" value="ECO:0007669"/>
    <property type="project" value="UniProtKB-SubCell"/>
</dbReference>
<dbReference type="GO" id="GO:0048476">
    <property type="term" value="C:Holliday junction resolvase complex"/>
    <property type="evidence" value="ECO:0007669"/>
    <property type="project" value="UniProtKB-UniRule"/>
</dbReference>
<dbReference type="GO" id="GO:0005524">
    <property type="term" value="F:ATP binding"/>
    <property type="evidence" value="ECO:0007669"/>
    <property type="project" value="UniProtKB-UniRule"/>
</dbReference>
<dbReference type="GO" id="GO:0016887">
    <property type="term" value="F:ATP hydrolysis activity"/>
    <property type="evidence" value="ECO:0007669"/>
    <property type="project" value="InterPro"/>
</dbReference>
<dbReference type="GO" id="GO:0000400">
    <property type="term" value="F:four-way junction DNA binding"/>
    <property type="evidence" value="ECO:0007669"/>
    <property type="project" value="UniProtKB-UniRule"/>
</dbReference>
<dbReference type="GO" id="GO:0009378">
    <property type="term" value="F:four-way junction helicase activity"/>
    <property type="evidence" value="ECO:0007669"/>
    <property type="project" value="InterPro"/>
</dbReference>
<dbReference type="GO" id="GO:0006310">
    <property type="term" value="P:DNA recombination"/>
    <property type="evidence" value="ECO:0007669"/>
    <property type="project" value="UniProtKB-UniRule"/>
</dbReference>
<dbReference type="GO" id="GO:0006281">
    <property type="term" value="P:DNA repair"/>
    <property type="evidence" value="ECO:0007669"/>
    <property type="project" value="UniProtKB-UniRule"/>
</dbReference>
<dbReference type="CDD" id="cd00009">
    <property type="entry name" value="AAA"/>
    <property type="match status" value="1"/>
</dbReference>
<dbReference type="FunFam" id="1.10.10.10:FF:000086">
    <property type="entry name" value="Holliday junction ATP-dependent DNA helicase RuvB"/>
    <property type="match status" value="1"/>
</dbReference>
<dbReference type="FunFam" id="1.10.8.60:FF:000023">
    <property type="entry name" value="Holliday junction ATP-dependent DNA helicase RuvB"/>
    <property type="match status" value="1"/>
</dbReference>
<dbReference type="FunFam" id="3.40.50.300:FF:000073">
    <property type="entry name" value="Holliday junction ATP-dependent DNA helicase RuvB"/>
    <property type="match status" value="1"/>
</dbReference>
<dbReference type="Gene3D" id="1.10.8.60">
    <property type="match status" value="1"/>
</dbReference>
<dbReference type="Gene3D" id="3.40.50.300">
    <property type="entry name" value="P-loop containing nucleotide triphosphate hydrolases"/>
    <property type="match status" value="1"/>
</dbReference>
<dbReference type="Gene3D" id="1.10.10.10">
    <property type="entry name" value="Winged helix-like DNA-binding domain superfamily/Winged helix DNA-binding domain"/>
    <property type="match status" value="1"/>
</dbReference>
<dbReference type="HAMAP" id="MF_00016">
    <property type="entry name" value="DNA_HJ_migration_RuvB"/>
    <property type="match status" value="1"/>
</dbReference>
<dbReference type="InterPro" id="IPR003593">
    <property type="entry name" value="AAA+_ATPase"/>
</dbReference>
<dbReference type="InterPro" id="IPR041445">
    <property type="entry name" value="AAA_lid_4"/>
</dbReference>
<dbReference type="InterPro" id="IPR004605">
    <property type="entry name" value="DNA_helicase_Holl-junc_RuvB"/>
</dbReference>
<dbReference type="InterPro" id="IPR027417">
    <property type="entry name" value="P-loop_NTPase"/>
</dbReference>
<dbReference type="InterPro" id="IPR008824">
    <property type="entry name" value="RuvB-like_N"/>
</dbReference>
<dbReference type="InterPro" id="IPR008823">
    <property type="entry name" value="RuvB_C"/>
</dbReference>
<dbReference type="InterPro" id="IPR036388">
    <property type="entry name" value="WH-like_DNA-bd_sf"/>
</dbReference>
<dbReference type="InterPro" id="IPR036390">
    <property type="entry name" value="WH_DNA-bd_sf"/>
</dbReference>
<dbReference type="NCBIfam" id="NF000868">
    <property type="entry name" value="PRK00080.1"/>
    <property type="match status" value="1"/>
</dbReference>
<dbReference type="NCBIfam" id="TIGR00635">
    <property type="entry name" value="ruvB"/>
    <property type="match status" value="1"/>
</dbReference>
<dbReference type="PANTHER" id="PTHR42848">
    <property type="match status" value="1"/>
</dbReference>
<dbReference type="PANTHER" id="PTHR42848:SF1">
    <property type="entry name" value="HOLLIDAY JUNCTION BRANCH MIGRATION COMPLEX SUBUNIT RUVB"/>
    <property type="match status" value="1"/>
</dbReference>
<dbReference type="Pfam" id="PF17864">
    <property type="entry name" value="AAA_lid_4"/>
    <property type="match status" value="1"/>
</dbReference>
<dbReference type="Pfam" id="PF05491">
    <property type="entry name" value="RuvB_C"/>
    <property type="match status" value="1"/>
</dbReference>
<dbReference type="Pfam" id="PF05496">
    <property type="entry name" value="RuvB_N"/>
    <property type="match status" value="1"/>
</dbReference>
<dbReference type="SMART" id="SM00382">
    <property type="entry name" value="AAA"/>
    <property type="match status" value="1"/>
</dbReference>
<dbReference type="SUPFAM" id="SSF52540">
    <property type="entry name" value="P-loop containing nucleoside triphosphate hydrolases"/>
    <property type="match status" value="1"/>
</dbReference>
<dbReference type="SUPFAM" id="SSF46785">
    <property type="entry name" value="Winged helix' DNA-binding domain"/>
    <property type="match status" value="1"/>
</dbReference>
<protein>
    <recommendedName>
        <fullName evidence="1">Holliday junction branch migration complex subunit RuvB</fullName>
        <ecNumber evidence="1">3.6.4.-</ecNumber>
    </recommendedName>
</protein>
<evidence type="ECO:0000255" key="1">
    <source>
        <dbReference type="HAMAP-Rule" id="MF_00016"/>
    </source>
</evidence>
<keyword id="KW-0067">ATP-binding</keyword>
<keyword id="KW-0963">Cytoplasm</keyword>
<keyword id="KW-0227">DNA damage</keyword>
<keyword id="KW-0233">DNA recombination</keyword>
<keyword id="KW-0234">DNA repair</keyword>
<keyword id="KW-0238">DNA-binding</keyword>
<keyword id="KW-0378">Hydrolase</keyword>
<keyword id="KW-0547">Nucleotide-binding</keyword>
<sequence>MIETDKLAAERIIAATPSSSHEEVFERALRPRQLDDYVGQEKVRGQLEIFIEAAKRRSEPLDHVLLFGPPGLGKTTLAHIIAREMGVNLRQTSGPVLERAGDLAALLTNLEANDVLFIDEIHRLSPVVEEILYPALEDYQIDIMIGEGPAARSVKLDLQPFTLVGATTRAGMLTNPLRDRFGIVARLEFYDADQLARIVRRSASLLNAHIDPSGALEIAKRSRGTPRIANRLLRRVRDFAEVKADGQITAAVADAALAMLDVDPVGFDLMDRKLLEAILHKFDGGPVGIDNLAAAIGEERDTIEDVLEPYLIQQGFLQRTPRGRVATLLTYRHFGLSAPDAGNERGMWDTPAGK</sequence>
<accession>B1YTD9</accession>
<organism>
    <name type="scientific">Burkholderia ambifaria (strain MC40-6)</name>
    <dbReference type="NCBI Taxonomy" id="398577"/>
    <lineage>
        <taxon>Bacteria</taxon>
        <taxon>Pseudomonadati</taxon>
        <taxon>Pseudomonadota</taxon>
        <taxon>Betaproteobacteria</taxon>
        <taxon>Burkholderiales</taxon>
        <taxon>Burkholderiaceae</taxon>
        <taxon>Burkholderia</taxon>
        <taxon>Burkholderia cepacia complex</taxon>
    </lineage>
</organism>
<feature type="chain" id="PRO_1000089621" description="Holliday junction branch migration complex subunit RuvB">
    <location>
        <begin position="1"/>
        <end position="354"/>
    </location>
</feature>
<feature type="region of interest" description="Large ATPase domain (RuvB-L)" evidence="1">
    <location>
        <begin position="4"/>
        <end position="190"/>
    </location>
</feature>
<feature type="region of interest" description="Small ATPAse domain (RuvB-S)" evidence="1">
    <location>
        <begin position="191"/>
        <end position="261"/>
    </location>
</feature>
<feature type="region of interest" description="Head domain (RuvB-H)" evidence="1">
    <location>
        <begin position="264"/>
        <end position="354"/>
    </location>
</feature>
<feature type="binding site" evidence="1">
    <location>
        <position position="29"/>
    </location>
    <ligand>
        <name>ATP</name>
        <dbReference type="ChEBI" id="CHEBI:30616"/>
    </ligand>
</feature>
<feature type="binding site" evidence="1">
    <location>
        <position position="30"/>
    </location>
    <ligand>
        <name>ATP</name>
        <dbReference type="ChEBI" id="CHEBI:30616"/>
    </ligand>
</feature>
<feature type="binding site" evidence="1">
    <location>
        <position position="71"/>
    </location>
    <ligand>
        <name>ATP</name>
        <dbReference type="ChEBI" id="CHEBI:30616"/>
    </ligand>
</feature>
<feature type="binding site" evidence="1">
    <location>
        <position position="74"/>
    </location>
    <ligand>
        <name>ATP</name>
        <dbReference type="ChEBI" id="CHEBI:30616"/>
    </ligand>
</feature>
<feature type="binding site" evidence="1">
    <location>
        <position position="75"/>
    </location>
    <ligand>
        <name>ATP</name>
        <dbReference type="ChEBI" id="CHEBI:30616"/>
    </ligand>
</feature>
<feature type="binding site" evidence="1">
    <location>
        <position position="75"/>
    </location>
    <ligand>
        <name>Mg(2+)</name>
        <dbReference type="ChEBI" id="CHEBI:18420"/>
    </ligand>
</feature>
<feature type="binding site" evidence="1">
    <location>
        <position position="76"/>
    </location>
    <ligand>
        <name>ATP</name>
        <dbReference type="ChEBI" id="CHEBI:30616"/>
    </ligand>
</feature>
<feature type="binding site" evidence="1">
    <location>
        <begin position="137"/>
        <end position="139"/>
    </location>
    <ligand>
        <name>ATP</name>
        <dbReference type="ChEBI" id="CHEBI:30616"/>
    </ligand>
</feature>
<feature type="binding site" evidence="1">
    <location>
        <position position="180"/>
    </location>
    <ligand>
        <name>ATP</name>
        <dbReference type="ChEBI" id="CHEBI:30616"/>
    </ligand>
</feature>
<feature type="binding site" evidence="1">
    <location>
        <position position="190"/>
    </location>
    <ligand>
        <name>ATP</name>
        <dbReference type="ChEBI" id="CHEBI:30616"/>
    </ligand>
</feature>
<feature type="binding site" evidence="1">
    <location>
        <position position="227"/>
    </location>
    <ligand>
        <name>ATP</name>
        <dbReference type="ChEBI" id="CHEBI:30616"/>
    </ligand>
</feature>
<feature type="binding site" evidence="1">
    <location>
        <position position="300"/>
    </location>
    <ligand>
        <name>DNA</name>
        <dbReference type="ChEBI" id="CHEBI:16991"/>
    </ligand>
</feature>
<feature type="binding site" evidence="1">
    <location>
        <position position="319"/>
    </location>
    <ligand>
        <name>DNA</name>
        <dbReference type="ChEBI" id="CHEBI:16991"/>
    </ligand>
</feature>
<feature type="binding site" evidence="1">
    <location>
        <position position="324"/>
    </location>
    <ligand>
        <name>DNA</name>
        <dbReference type="ChEBI" id="CHEBI:16991"/>
    </ligand>
</feature>
<name>RUVB_BURA4</name>
<reference key="1">
    <citation type="submission" date="2008-04" db="EMBL/GenBank/DDBJ databases">
        <title>Complete sequence of chromosome 1 of Burkholderia ambifaria MC40-6.</title>
        <authorList>
            <person name="Copeland A."/>
            <person name="Lucas S."/>
            <person name="Lapidus A."/>
            <person name="Glavina del Rio T."/>
            <person name="Dalin E."/>
            <person name="Tice H."/>
            <person name="Pitluck S."/>
            <person name="Chain P."/>
            <person name="Malfatti S."/>
            <person name="Shin M."/>
            <person name="Vergez L."/>
            <person name="Lang D."/>
            <person name="Schmutz J."/>
            <person name="Larimer F."/>
            <person name="Land M."/>
            <person name="Hauser L."/>
            <person name="Kyrpides N."/>
            <person name="Lykidis A."/>
            <person name="Ramette A."/>
            <person name="Konstantinidis K."/>
            <person name="Tiedje J."/>
            <person name="Richardson P."/>
        </authorList>
    </citation>
    <scope>NUCLEOTIDE SEQUENCE [LARGE SCALE GENOMIC DNA]</scope>
    <source>
        <strain>MC40-6</strain>
    </source>
</reference>
<gene>
    <name evidence="1" type="primary">ruvB</name>
    <name type="ordered locus">BamMC406_0607</name>
</gene>
<proteinExistence type="inferred from homology"/>
<comment type="function">
    <text evidence="1">The RuvA-RuvB-RuvC complex processes Holliday junction (HJ) DNA during genetic recombination and DNA repair, while the RuvA-RuvB complex plays an important role in the rescue of blocked DNA replication forks via replication fork reversal (RFR). RuvA specifically binds to HJ cruciform DNA, conferring on it an open structure. The RuvB hexamer acts as an ATP-dependent pump, pulling dsDNA into and through the RuvAB complex. RuvB forms 2 homohexamers on either side of HJ DNA bound by 1 or 2 RuvA tetramers; 4 subunits per hexamer contact DNA at a time. Coordinated motions by a converter formed by DNA-disengaged RuvB subunits stimulates ATP hydrolysis and nucleotide exchange. Immobilization of the converter enables RuvB to convert the ATP-contained energy into a lever motion, pulling 2 nucleotides of DNA out of the RuvA tetramer per ATP hydrolyzed, thus driving DNA branch migration. The RuvB motors rotate together with the DNA substrate, which together with the progressing nucleotide cycle form the mechanistic basis for DNA recombination by continuous HJ branch migration. Branch migration allows RuvC to scan DNA until it finds its consensus sequence, where it cleaves and resolves cruciform DNA.</text>
</comment>
<comment type="catalytic activity">
    <reaction evidence="1">
        <text>ATP + H2O = ADP + phosphate + H(+)</text>
        <dbReference type="Rhea" id="RHEA:13065"/>
        <dbReference type="ChEBI" id="CHEBI:15377"/>
        <dbReference type="ChEBI" id="CHEBI:15378"/>
        <dbReference type="ChEBI" id="CHEBI:30616"/>
        <dbReference type="ChEBI" id="CHEBI:43474"/>
        <dbReference type="ChEBI" id="CHEBI:456216"/>
    </reaction>
</comment>
<comment type="subunit">
    <text evidence="1">Homohexamer. Forms an RuvA(8)-RuvB(12)-Holliday junction (HJ) complex. HJ DNA is sandwiched between 2 RuvA tetramers; dsDNA enters through RuvA and exits via RuvB. An RuvB hexamer assembles on each DNA strand where it exits the tetramer. Each RuvB hexamer is contacted by two RuvA subunits (via domain III) on 2 adjacent RuvB subunits; this complex drives branch migration. In the full resolvosome a probable DNA-RuvA(4)-RuvB(12)-RuvC(2) complex forms which resolves the HJ.</text>
</comment>
<comment type="subcellular location">
    <subcellularLocation>
        <location evidence="1">Cytoplasm</location>
    </subcellularLocation>
</comment>
<comment type="domain">
    <text evidence="1">Has 3 domains, the large (RuvB-L) and small ATPase (RuvB-S) domains and the C-terminal head (RuvB-H) domain. The head domain binds DNA, while the ATPase domains jointly bind ATP, ADP or are empty depending on the state of the subunit in the translocation cycle. During a single DNA translocation step the structure of each domain remains the same, but their relative positions change.</text>
</comment>
<comment type="similarity">
    <text evidence="1">Belongs to the RuvB family.</text>
</comment>